<accession>B7NVN0</accession>
<evidence type="ECO:0000255" key="1">
    <source>
        <dbReference type="HAMAP-Rule" id="MF_00131"/>
    </source>
</evidence>
<feature type="chain" id="PRO_1000117737" description="Tryptophan synthase alpha chain">
    <location>
        <begin position="1"/>
        <end position="268"/>
    </location>
</feature>
<feature type="active site" description="Proton acceptor" evidence="1">
    <location>
        <position position="49"/>
    </location>
</feature>
<feature type="active site" description="Proton acceptor" evidence="1">
    <location>
        <position position="60"/>
    </location>
</feature>
<proteinExistence type="inferred from homology"/>
<comment type="function">
    <text evidence="1">The alpha subunit is responsible for the aldol cleavage of indoleglycerol phosphate to indole and glyceraldehyde 3-phosphate.</text>
</comment>
<comment type="catalytic activity">
    <reaction evidence="1">
        <text>(1S,2R)-1-C-(indol-3-yl)glycerol 3-phosphate + L-serine = D-glyceraldehyde 3-phosphate + L-tryptophan + H2O</text>
        <dbReference type="Rhea" id="RHEA:10532"/>
        <dbReference type="ChEBI" id="CHEBI:15377"/>
        <dbReference type="ChEBI" id="CHEBI:33384"/>
        <dbReference type="ChEBI" id="CHEBI:57912"/>
        <dbReference type="ChEBI" id="CHEBI:58866"/>
        <dbReference type="ChEBI" id="CHEBI:59776"/>
        <dbReference type="EC" id="4.2.1.20"/>
    </reaction>
</comment>
<comment type="pathway">
    <text evidence="1">Amino-acid biosynthesis; L-tryptophan biosynthesis; L-tryptophan from chorismate: step 5/5.</text>
</comment>
<comment type="subunit">
    <text evidence="1">Tetramer of two alpha and two beta chains.</text>
</comment>
<comment type="similarity">
    <text evidence="1">Belongs to the TrpA family.</text>
</comment>
<dbReference type="EC" id="4.2.1.20" evidence="1"/>
<dbReference type="EMBL" id="CU928164">
    <property type="protein sequence ID" value="CAR17728.1"/>
    <property type="molecule type" value="Genomic_DNA"/>
</dbReference>
<dbReference type="RefSeq" id="WP_000443096.1">
    <property type="nucleotide sequence ID" value="NC_011750.1"/>
</dbReference>
<dbReference type="RefSeq" id="YP_002407596.1">
    <property type="nucleotide sequence ID" value="NC_011750.1"/>
</dbReference>
<dbReference type="SMR" id="B7NVN0"/>
<dbReference type="STRING" id="585057.ECIAI39_1597"/>
<dbReference type="KEGG" id="ect:ECIAI39_1597"/>
<dbReference type="PATRIC" id="fig|585057.6.peg.1668"/>
<dbReference type="HOGENOM" id="CLU_016734_0_4_6"/>
<dbReference type="UniPathway" id="UPA00035">
    <property type="reaction ID" value="UER00044"/>
</dbReference>
<dbReference type="Proteomes" id="UP000000749">
    <property type="component" value="Chromosome"/>
</dbReference>
<dbReference type="GO" id="GO:0005829">
    <property type="term" value="C:cytosol"/>
    <property type="evidence" value="ECO:0007669"/>
    <property type="project" value="TreeGrafter"/>
</dbReference>
<dbReference type="GO" id="GO:0004834">
    <property type="term" value="F:tryptophan synthase activity"/>
    <property type="evidence" value="ECO:0007669"/>
    <property type="project" value="UniProtKB-UniRule"/>
</dbReference>
<dbReference type="CDD" id="cd04724">
    <property type="entry name" value="Tryptophan_synthase_alpha"/>
    <property type="match status" value="1"/>
</dbReference>
<dbReference type="FunFam" id="3.20.20.70:FF:000037">
    <property type="entry name" value="Tryptophan synthase alpha chain"/>
    <property type="match status" value="1"/>
</dbReference>
<dbReference type="Gene3D" id="3.20.20.70">
    <property type="entry name" value="Aldolase class I"/>
    <property type="match status" value="1"/>
</dbReference>
<dbReference type="HAMAP" id="MF_00131">
    <property type="entry name" value="Trp_synth_alpha"/>
    <property type="match status" value="1"/>
</dbReference>
<dbReference type="InterPro" id="IPR013785">
    <property type="entry name" value="Aldolase_TIM"/>
</dbReference>
<dbReference type="InterPro" id="IPR011060">
    <property type="entry name" value="RibuloseP-bd_barrel"/>
</dbReference>
<dbReference type="InterPro" id="IPR018204">
    <property type="entry name" value="Trp_synthase_alpha_AS"/>
</dbReference>
<dbReference type="InterPro" id="IPR002028">
    <property type="entry name" value="Trp_synthase_suA"/>
</dbReference>
<dbReference type="NCBIfam" id="TIGR00262">
    <property type="entry name" value="trpA"/>
    <property type="match status" value="1"/>
</dbReference>
<dbReference type="PANTHER" id="PTHR43406:SF1">
    <property type="entry name" value="TRYPTOPHAN SYNTHASE ALPHA CHAIN, CHLOROPLASTIC"/>
    <property type="match status" value="1"/>
</dbReference>
<dbReference type="PANTHER" id="PTHR43406">
    <property type="entry name" value="TRYPTOPHAN SYNTHASE, ALPHA CHAIN"/>
    <property type="match status" value="1"/>
</dbReference>
<dbReference type="Pfam" id="PF00290">
    <property type="entry name" value="Trp_syntA"/>
    <property type="match status" value="1"/>
</dbReference>
<dbReference type="SUPFAM" id="SSF51366">
    <property type="entry name" value="Ribulose-phoshate binding barrel"/>
    <property type="match status" value="1"/>
</dbReference>
<dbReference type="PROSITE" id="PS00167">
    <property type="entry name" value="TRP_SYNTHASE_ALPHA"/>
    <property type="match status" value="1"/>
</dbReference>
<keyword id="KW-0028">Amino-acid biosynthesis</keyword>
<keyword id="KW-0057">Aromatic amino acid biosynthesis</keyword>
<keyword id="KW-0456">Lyase</keyword>
<keyword id="KW-0822">Tryptophan biosynthesis</keyword>
<gene>
    <name evidence="1" type="primary">trpA</name>
    <name type="ordered locus">ECIAI39_1597</name>
</gene>
<organism>
    <name type="scientific">Escherichia coli O7:K1 (strain IAI39 / ExPEC)</name>
    <dbReference type="NCBI Taxonomy" id="585057"/>
    <lineage>
        <taxon>Bacteria</taxon>
        <taxon>Pseudomonadati</taxon>
        <taxon>Pseudomonadota</taxon>
        <taxon>Gammaproteobacteria</taxon>
        <taxon>Enterobacterales</taxon>
        <taxon>Enterobacteriaceae</taxon>
        <taxon>Escherichia</taxon>
    </lineage>
</organism>
<protein>
    <recommendedName>
        <fullName evidence="1">Tryptophan synthase alpha chain</fullName>
        <ecNumber evidence="1">4.2.1.20</ecNumber>
    </recommendedName>
</protein>
<reference key="1">
    <citation type="journal article" date="2009" name="PLoS Genet.">
        <title>Organised genome dynamics in the Escherichia coli species results in highly diverse adaptive paths.</title>
        <authorList>
            <person name="Touchon M."/>
            <person name="Hoede C."/>
            <person name="Tenaillon O."/>
            <person name="Barbe V."/>
            <person name="Baeriswyl S."/>
            <person name="Bidet P."/>
            <person name="Bingen E."/>
            <person name="Bonacorsi S."/>
            <person name="Bouchier C."/>
            <person name="Bouvet O."/>
            <person name="Calteau A."/>
            <person name="Chiapello H."/>
            <person name="Clermont O."/>
            <person name="Cruveiller S."/>
            <person name="Danchin A."/>
            <person name="Diard M."/>
            <person name="Dossat C."/>
            <person name="Karoui M.E."/>
            <person name="Frapy E."/>
            <person name="Garry L."/>
            <person name="Ghigo J.M."/>
            <person name="Gilles A.M."/>
            <person name="Johnson J."/>
            <person name="Le Bouguenec C."/>
            <person name="Lescat M."/>
            <person name="Mangenot S."/>
            <person name="Martinez-Jehanne V."/>
            <person name="Matic I."/>
            <person name="Nassif X."/>
            <person name="Oztas S."/>
            <person name="Petit M.A."/>
            <person name="Pichon C."/>
            <person name="Rouy Z."/>
            <person name="Ruf C.S."/>
            <person name="Schneider D."/>
            <person name="Tourret J."/>
            <person name="Vacherie B."/>
            <person name="Vallenet D."/>
            <person name="Medigue C."/>
            <person name="Rocha E.P.C."/>
            <person name="Denamur E."/>
        </authorList>
    </citation>
    <scope>NUCLEOTIDE SEQUENCE [LARGE SCALE GENOMIC DNA]</scope>
    <source>
        <strain>IAI39 / ExPEC</strain>
    </source>
</reference>
<sequence>MERYESLFIRLKERHEGAFVPFVTLGDPGIEQSLKIIDTLIEAGADALELGIPFSDPLADGPTIQNATLRAFAAGVTPAQCFEMLALIRQKHPTIPIGLLMYANLVFNKGVDEFYAQCEKVGVDSVLVADVPVEESAPFRQAALRHNVAPIFICPPNADDDLLRQIASYGRGYTYLLSRAGVTGAENRAALPLNHLVTKLKEYNAAPPLQGFGISAPDQVKAAIDAGAAGAISGSAIVKIIEQHINEPEKMLAALKAFVQPMKAATRS</sequence>
<name>TRPA_ECO7I</name>